<sequence>MSLQYQTGFGNACATEALPGALPAGRNSPQICPYGLYAEQLSGTAFTAPRAENRRSWLYRIRPGVQHLPFAPFAGAQRWLSDFGRQPVTPNQLRWSPLPMPDAPTDFIDGMHTWGGNGGPEEQSGVGIHLYAANRSMQGRFFYNADGEMLIVPQQGRLRLATELGLIDIEPYEIAVVPRGVRLRVELLDDVARGYMLENFGTAMRLPELGPIGSNCLANARDFQIPVAWYEDVEGDFELIAKFTGGFWRAPIAHSPLNVVAWHGTHAPYKYDLRNFNTVGSISYDHPDPSIFTVLTSPSDTPGTANMDFAIFPPRILAMENTFRPPWFHRNIASEFMGLIHGVYDAKAEGFAPGGASLHNCMSGHGPDADTFEKASHADTSQAHYIRDTMAFMFETRRVIRPTAQALASPQRQDDYYQCWQGLQKHFDPEQA</sequence>
<comment type="function">
    <text evidence="1">Involved in the catabolism of homogentisate (2,5-dihydroxyphenylacetate or 2,5-OH-PhAc), a central intermediate in the degradation of phenylalanine and tyrosine. Catalyzes the oxidative ring cleavage of the aromatic ring of homogentisate to yield maleylacetoacetate.</text>
</comment>
<comment type="catalytic activity">
    <reaction evidence="1">
        <text>homogentisate + O2 = 4-maleylacetoacetate + H(+)</text>
        <dbReference type="Rhea" id="RHEA:15449"/>
        <dbReference type="ChEBI" id="CHEBI:15378"/>
        <dbReference type="ChEBI" id="CHEBI:15379"/>
        <dbReference type="ChEBI" id="CHEBI:16169"/>
        <dbReference type="ChEBI" id="CHEBI:17105"/>
        <dbReference type="EC" id="1.13.11.5"/>
    </reaction>
</comment>
<comment type="cofactor">
    <cofactor evidence="1">
        <name>Fe cation</name>
        <dbReference type="ChEBI" id="CHEBI:24875"/>
    </cofactor>
</comment>
<comment type="pathway">
    <text evidence="1">Amino-acid degradation; L-phenylalanine degradation; acetoacetate and fumarate from L-phenylalanine: step 4/6.</text>
</comment>
<comment type="subunit">
    <text evidence="1">Hexamer; dimer of trimers.</text>
</comment>
<comment type="similarity">
    <text evidence="1">Belongs to the homogentisate dioxygenase family.</text>
</comment>
<name>HGD_BORBR</name>
<gene>
    <name evidence="1" type="primary">hmgA</name>
    <name type="ordered locus">BB0892</name>
</gene>
<accession>Q7WNZ3</accession>
<proteinExistence type="inferred from homology"/>
<protein>
    <recommendedName>
        <fullName evidence="1">Homogentisate 1,2-dioxygenase</fullName>
        <shortName evidence="1">HGDO</shortName>
        <ecNumber evidence="1">1.13.11.5</ecNumber>
    </recommendedName>
    <alternativeName>
        <fullName evidence="1">Homogentisate oxygenase</fullName>
    </alternativeName>
    <alternativeName>
        <fullName evidence="1">Homogentisic acid oxidase</fullName>
    </alternativeName>
    <alternativeName>
        <fullName evidence="1">Homogentisicase</fullName>
    </alternativeName>
</protein>
<feature type="chain" id="PRO_0000225782" description="Homogentisate 1,2-dioxygenase">
    <location>
        <begin position="1"/>
        <end position="432"/>
    </location>
</feature>
<feature type="active site" description="Proton acceptor" evidence="1">
    <location>
        <position position="286"/>
    </location>
</feature>
<feature type="binding site" evidence="1">
    <location>
        <position position="329"/>
    </location>
    <ligand>
        <name>Fe cation</name>
        <dbReference type="ChEBI" id="CHEBI:24875"/>
    </ligand>
</feature>
<feature type="binding site" evidence="1">
    <location>
        <position position="335"/>
    </location>
    <ligand>
        <name>Fe cation</name>
        <dbReference type="ChEBI" id="CHEBI:24875"/>
    </ligand>
</feature>
<feature type="binding site" evidence="1">
    <location>
        <position position="344"/>
    </location>
    <ligand>
        <name>homogentisate</name>
        <dbReference type="ChEBI" id="CHEBI:16169"/>
    </ligand>
</feature>
<feature type="binding site" evidence="1">
    <location>
        <position position="365"/>
    </location>
    <ligand>
        <name>Fe cation</name>
        <dbReference type="ChEBI" id="CHEBI:24875"/>
    </ligand>
</feature>
<feature type="binding site" evidence="1">
    <location>
        <position position="365"/>
    </location>
    <ligand>
        <name>homogentisate</name>
        <dbReference type="ChEBI" id="CHEBI:16169"/>
    </ligand>
</feature>
<organism>
    <name type="scientific">Bordetella bronchiseptica (strain ATCC BAA-588 / NCTC 13252 / RB50)</name>
    <name type="common">Alcaligenes bronchisepticus</name>
    <dbReference type="NCBI Taxonomy" id="257310"/>
    <lineage>
        <taxon>Bacteria</taxon>
        <taxon>Pseudomonadati</taxon>
        <taxon>Pseudomonadota</taxon>
        <taxon>Betaproteobacteria</taxon>
        <taxon>Burkholderiales</taxon>
        <taxon>Alcaligenaceae</taxon>
        <taxon>Bordetella</taxon>
    </lineage>
</organism>
<dbReference type="EC" id="1.13.11.5" evidence="1"/>
<dbReference type="EMBL" id="BX640439">
    <property type="protein sequence ID" value="CAE31391.1"/>
    <property type="molecule type" value="Genomic_DNA"/>
</dbReference>
<dbReference type="RefSeq" id="WP_010925976.1">
    <property type="nucleotide sequence ID" value="NC_002927.3"/>
</dbReference>
<dbReference type="SMR" id="Q7WNZ3"/>
<dbReference type="GeneID" id="93202557"/>
<dbReference type="KEGG" id="bbr:BB0892"/>
<dbReference type="eggNOG" id="COG3508">
    <property type="taxonomic scope" value="Bacteria"/>
</dbReference>
<dbReference type="HOGENOM" id="CLU_027174_0_0_4"/>
<dbReference type="UniPathway" id="UPA00139">
    <property type="reaction ID" value="UER00339"/>
</dbReference>
<dbReference type="Proteomes" id="UP000001027">
    <property type="component" value="Chromosome"/>
</dbReference>
<dbReference type="GO" id="GO:0005737">
    <property type="term" value="C:cytoplasm"/>
    <property type="evidence" value="ECO:0007669"/>
    <property type="project" value="TreeGrafter"/>
</dbReference>
<dbReference type="GO" id="GO:0004411">
    <property type="term" value="F:homogentisate 1,2-dioxygenase activity"/>
    <property type="evidence" value="ECO:0007669"/>
    <property type="project" value="UniProtKB-UniRule"/>
</dbReference>
<dbReference type="GO" id="GO:0005506">
    <property type="term" value="F:iron ion binding"/>
    <property type="evidence" value="ECO:0007669"/>
    <property type="project" value="UniProtKB-UniRule"/>
</dbReference>
<dbReference type="GO" id="GO:0006559">
    <property type="term" value="P:L-phenylalanine catabolic process"/>
    <property type="evidence" value="ECO:0007669"/>
    <property type="project" value="UniProtKB-UniRule"/>
</dbReference>
<dbReference type="GO" id="GO:0006572">
    <property type="term" value="P:tyrosine catabolic process"/>
    <property type="evidence" value="ECO:0007669"/>
    <property type="project" value="UniProtKB-UniRule"/>
</dbReference>
<dbReference type="CDD" id="cd07000">
    <property type="entry name" value="cupin_HGO_N"/>
    <property type="match status" value="1"/>
</dbReference>
<dbReference type="FunFam" id="2.60.120.10:FF:000034">
    <property type="entry name" value="Homogentisate 1,2-dioxygenase"/>
    <property type="match status" value="1"/>
</dbReference>
<dbReference type="Gene3D" id="2.60.120.10">
    <property type="entry name" value="Jelly Rolls"/>
    <property type="match status" value="1"/>
</dbReference>
<dbReference type="HAMAP" id="MF_00334">
    <property type="entry name" value="Homogentis_dioxygen"/>
    <property type="match status" value="1"/>
</dbReference>
<dbReference type="InterPro" id="IPR046451">
    <property type="entry name" value="HgmA_C"/>
</dbReference>
<dbReference type="InterPro" id="IPR046452">
    <property type="entry name" value="HgmA_N"/>
</dbReference>
<dbReference type="InterPro" id="IPR005708">
    <property type="entry name" value="Homogentis_dOase"/>
</dbReference>
<dbReference type="InterPro" id="IPR022950">
    <property type="entry name" value="Homogentis_dOase_bac"/>
</dbReference>
<dbReference type="InterPro" id="IPR014710">
    <property type="entry name" value="RmlC-like_jellyroll"/>
</dbReference>
<dbReference type="InterPro" id="IPR011051">
    <property type="entry name" value="RmlC_Cupin_sf"/>
</dbReference>
<dbReference type="NCBIfam" id="TIGR01015">
    <property type="entry name" value="hmgA"/>
    <property type="match status" value="1"/>
</dbReference>
<dbReference type="PANTHER" id="PTHR11056">
    <property type="entry name" value="HOMOGENTISATE 1,2-DIOXYGENASE"/>
    <property type="match status" value="1"/>
</dbReference>
<dbReference type="PANTHER" id="PTHR11056:SF0">
    <property type="entry name" value="HOMOGENTISATE 1,2-DIOXYGENASE"/>
    <property type="match status" value="1"/>
</dbReference>
<dbReference type="Pfam" id="PF04209">
    <property type="entry name" value="HgmA_C"/>
    <property type="match status" value="1"/>
</dbReference>
<dbReference type="Pfam" id="PF20510">
    <property type="entry name" value="HgmA_N"/>
    <property type="match status" value="1"/>
</dbReference>
<dbReference type="SUPFAM" id="SSF51182">
    <property type="entry name" value="RmlC-like cupins"/>
    <property type="match status" value="1"/>
</dbReference>
<evidence type="ECO:0000255" key="1">
    <source>
        <dbReference type="HAMAP-Rule" id="MF_00334"/>
    </source>
</evidence>
<keyword id="KW-0223">Dioxygenase</keyword>
<keyword id="KW-0408">Iron</keyword>
<keyword id="KW-0479">Metal-binding</keyword>
<keyword id="KW-0560">Oxidoreductase</keyword>
<keyword id="KW-0585">Phenylalanine catabolism</keyword>
<keyword id="KW-0828">Tyrosine catabolism</keyword>
<reference key="1">
    <citation type="journal article" date="2003" name="Nat. Genet.">
        <title>Comparative analysis of the genome sequences of Bordetella pertussis, Bordetella parapertussis and Bordetella bronchiseptica.</title>
        <authorList>
            <person name="Parkhill J."/>
            <person name="Sebaihia M."/>
            <person name="Preston A."/>
            <person name="Murphy L.D."/>
            <person name="Thomson N.R."/>
            <person name="Harris D.E."/>
            <person name="Holden M.T.G."/>
            <person name="Churcher C.M."/>
            <person name="Bentley S.D."/>
            <person name="Mungall K.L."/>
            <person name="Cerdeno-Tarraga A.-M."/>
            <person name="Temple L."/>
            <person name="James K.D."/>
            <person name="Harris B."/>
            <person name="Quail M.A."/>
            <person name="Achtman M."/>
            <person name="Atkin R."/>
            <person name="Baker S."/>
            <person name="Basham D."/>
            <person name="Bason N."/>
            <person name="Cherevach I."/>
            <person name="Chillingworth T."/>
            <person name="Collins M."/>
            <person name="Cronin A."/>
            <person name="Davis P."/>
            <person name="Doggett J."/>
            <person name="Feltwell T."/>
            <person name="Goble A."/>
            <person name="Hamlin N."/>
            <person name="Hauser H."/>
            <person name="Holroyd S."/>
            <person name="Jagels K."/>
            <person name="Leather S."/>
            <person name="Moule S."/>
            <person name="Norberczak H."/>
            <person name="O'Neil S."/>
            <person name="Ormond D."/>
            <person name="Price C."/>
            <person name="Rabbinowitsch E."/>
            <person name="Rutter S."/>
            <person name="Sanders M."/>
            <person name="Saunders D."/>
            <person name="Seeger K."/>
            <person name="Sharp S."/>
            <person name="Simmonds M."/>
            <person name="Skelton J."/>
            <person name="Squares R."/>
            <person name="Squares S."/>
            <person name="Stevens K."/>
            <person name="Unwin L."/>
            <person name="Whitehead S."/>
            <person name="Barrell B.G."/>
            <person name="Maskell D.J."/>
        </authorList>
    </citation>
    <scope>NUCLEOTIDE SEQUENCE [LARGE SCALE GENOMIC DNA]</scope>
    <source>
        <strain>ATCC BAA-588 / NCTC 13252 / RB50</strain>
    </source>
</reference>